<protein>
    <recommendedName>
        <fullName evidence="1">N-methyl-L-tryptophan oxidase</fullName>
        <shortName evidence="1">MTOX</shortName>
        <ecNumber evidence="1">1.5.3.-</ecNumber>
    </recommendedName>
</protein>
<dbReference type="EC" id="1.5.3.-" evidence="1"/>
<dbReference type="EMBL" id="FM180568">
    <property type="protein sequence ID" value="CAS08697.1"/>
    <property type="molecule type" value="Genomic_DNA"/>
</dbReference>
<dbReference type="RefSeq" id="WP_000872788.1">
    <property type="nucleotide sequence ID" value="NC_011601.1"/>
</dbReference>
<dbReference type="SMR" id="B7UP73"/>
<dbReference type="KEGG" id="ecg:E2348C_1149"/>
<dbReference type="HOGENOM" id="CLU_007884_2_1_6"/>
<dbReference type="Proteomes" id="UP000008205">
    <property type="component" value="Chromosome"/>
</dbReference>
<dbReference type="GO" id="GO:0005829">
    <property type="term" value="C:cytosol"/>
    <property type="evidence" value="ECO:0007669"/>
    <property type="project" value="TreeGrafter"/>
</dbReference>
<dbReference type="GO" id="GO:0050660">
    <property type="term" value="F:flavin adenine dinucleotide binding"/>
    <property type="evidence" value="ECO:0007669"/>
    <property type="project" value="InterPro"/>
</dbReference>
<dbReference type="GO" id="GO:0050131">
    <property type="term" value="F:N-methyl-L-amino-acid oxidase activity"/>
    <property type="evidence" value="ECO:0007669"/>
    <property type="project" value="InterPro"/>
</dbReference>
<dbReference type="GO" id="GO:0008115">
    <property type="term" value="F:sarcosine oxidase activity"/>
    <property type="evidence" value="ECO:0007669"/>
    <property type="project" value="TreeGrafter"/>
</dbReference>
<dbReference type="Gene3D" id="3.30.9.10">
    <property type="entry name" value="D-Amino Acid Oxidase, subunit A, domain 2"/>
    <property type="match status" value="1"/>
</dbReference>
<dbReference type="Gene3D" id="3.50.50.60">
    <property type="entry name" value="FAD/NAD(P)-binding domain"/>
    <property type="match status" value="1"/>
</dbReference>
<dbReference type="HAMAP" id="MF_00515">
    <property type="entry name" value="MTOX"/>
    <property type="match status" value="1"/>
</dbReference>
<dbReference type="InterPro" id="IPR006076">
    <property type="entry name" value="FAD-dep_OxRdtase"/>
</dbReference>
<dbReference type="InterPro" id="IPR036188">
    <property type="entry name" value="FAD/NAD-bd_sf"/>
</dbReference>
<dbReference type="InterPro" id="IPR023493">
    <property type="entry name" value="Me_Trp_Oxase_MTOX"/>
</dbReference>
<dbReference type="InterPro" id="IPR045170">
    <property type="entry name" value="MTOX"/>
</dbReference>
<dbReference type="NCBIfam" id="NF008425">
    <property type="entry name" value="PRK11259.1"/>
    <property type="match status" value="1"/>
</dbReference>
<dbReference type="PANTHER" id="PTHR10961:SF7">
    <property type="entry name" value="FAD DEPENDENT OXIDOREDUCTASE DOMAIN-CONTAINING PROTEIN"/>
    <property type="match status" value="1"/>
</dbReference>
<dbReference type="PANTHER" id="PTHR10961">
    <property type="entry name" value="PEROXISOMAL SARCOSINE OXIDASE"/>
    <property type="match status" value="1"/>
</dbReference>
<dbReference type="Pfam" id="PF01266">
    <property type="entry name" value="DAO"/>
    <property type="match status" value="1"/>
</dbReference>
<dbReference type="SUPFAM" id="SSF54373">
    <property type="entry name" value="FAD-linked reductases, C-terminal domain"/>
    <property type="match status" value="1"/>
</dbReference>
<dbReference type="SUPFAM" id="SSF51905">
    <property type="entry name" value="FAD/NAD(P)-binding domain"/>
    <property type="match status" value="1"/>
</dbReference>
<organism>
    <name type="scientific">Escherichia coli O127:H6 (strain E2348/69 / EPEC)</name>
    <dbReference type="NCBI Taxonomy" id="574521"/>
    <lineage>
        <taxon>Bacteria</taxon>
        <taxon>Pseudomonadati</taxon>
        <taxon>Pseudomonadota</taxon>
        <taxon>Gammaproteobacteria</taxon>
        <taxon>Enterobacterales</taxon>
        <taxon>Enterobacteriaceae</taxon>
        <taxon>Escherichia</taxon>
    </lineage>
</organism>
<proteinExistence type="inferred from homology"/>
<name>MTOX_ECO27</name>
<gene>
    <name evidence="1" type="primary">solA</name>
    <name type="ordered locus">E2348C_1149</name>
</gene>
<feature type="chain" id="PRO_1000146172" description="N-methyl-L-tryptophan oxidase">
    <location>
        <begin position="1"/>
        <end position="372"/>
    </location>
</feature>
<feature type="binding site" evidence="1">
    <location>
        <begin position="4"/>
        <end position="34"/>
    </location>
    <ligand>
        <name>FAD</name>
        <dbReference type="ChEBI" id="CHEBI:57692"/>
    </ligand>
</feature>
<feature type="modified residue" description="S-8alpha-FAD cysteine" evidence="1">
    <location>
        <position position="308"/>
    </location>
</feature>
<reference key="1">
    <citation type="journal article" date="2009" name="J. Bacteriol.">
        <title>Complete genome sequence and comparative genome analysis of enteropathogenic Escherichia coli O127:H6 strain E2348/69.</title>
        <authorList>
            <person name="Iguchi A."/>
            <person name="Thomson N.R."/>
            <person name="Ogura Y."/>
            <person name="Saunders D."/>
            <person name="Ooka T."/>
            <person name="Henderson I.R."/>
            <person name="Harris D."/>
            <person name="Asadulghani M."/>
            <person name="Kurokawa K."/>
            <person name="Dean P."/>
            <person name="Kenny B."/>
            <person name="Quail M.A."/>
            <person name="Thurston S."/>
            <person name="Dougan G."/>
            <person name="Hayashi T."/>
            <person name="Parkhill J."/>
            <person name="Frankel G."/>
        </authorList>
    </citation>
    <scope>NUCLEOTIDE SEQUENCE [LARGE SCALE GENOMIC DNA]</scope>
    <source>
        <strain>E2348/69 / EPEC</strain>
    </source>
</reference>
<sequence>MKYDLIIIGSGSVGAAAGYYATRAGLNVLMTDAHMPPHQHGSHHGDTRLIRHAYGEGEKYVPLVLRAQMLWDELSRHNEDDPIFVRSGVINLGPADSAFLANVAHSAEQWQLNVEKLDAQGIMARWPEIRVPDNYIGLFETDSGFLRSELAIKTWIQLAKEAGCAQLFNCPVTAIRHDDDGVTIETADGEYQAKKAIVCAGTWVKDLLPELPVLPVRKVFAWYQADGRYSVKNKFPAFTGELPNGDQYYGFPAENDALKIGKHNGGQVIHSADERVPFAEVVSDGSEAFPFLRNVLPGIGCCLYGAACTYDNSPDEDFIIDTLPGHDNTLLITGLSGHGFKFASVLGEIAADFAQDKKSDFDLTPFRLSRFQ</sequence>
<comment type="function">
    <text evidence="1">Catalyzes the oxidative demethylation of N-methyl-L-tryptophan.</text>
</comment>
<comment type="catalytic activity">
    <reaction evidence="1">
        <text>N(alpha)-methyl-L-tryptophan + O2 + H2O = L-tryptophan + formaldehyde + H2O2</text>
        <dbReference type="Rhea" id="RHEA:28006"/>
        <dbReference type="ChEBI" id="CHEBI:15377"/>
        <dbReference type="ChEBI" id="CHEBI:15379"/>
        <dbReference type="ChEBI" id="CHEBI:16240"/>
        <dbReference type="ChEBI" id="CHEBI:16842"/>
        <dbReference type="ChEBI" id="CHEBI:57283"/>
        <dbReference type="ChEBI" id="CHEBI:57912"/>
    </reaction>
</comment>
<comment type="cofactor">
    <cofactor evidence="1">
        <name>FAD</name>
        <dbReference type="ChEBI" id="CHEBI:57692"/>
    </cofactor>
    <text evidence="1">Binds 1 FAD per subunit.</text>
</comment>
<comment type="subunit">
    <text evidence="1">Monomer.</text>
</comment>
<comment type="similarity">
    <text evidence="1">Belongs to the MSOX/MTOX family. MTOX subfamily.</text>
</comment>
<evidence type="ECO:0000255" key="1">
    <source>
        <dbReference type="HAMAP-Rule" id="MF_00515"/>
    </source>
</evidence>
<accession>B7UP73</accession>
<keyword id="KW-0274">FAD</keyword>
<keyword id="KW-0285">Flavoprotein</keyword>
<keyword id="KW-0560">Oxidoreductase</keyword>
<keyword id="KW-1185">Reference proteome</keyword>